<feature type="chain" id="PRO_0000085899" description="Casein kinase II subunit alpha">
    <location>
        <begin position="1"/>
        <end position="337"/>
    </location>
</feature>
<feature type="domain" description="Protein kinase" evidence="1">
    <location>
        <begin position="47"/>
        <end position="332"/>
    </location>
</feature>
<feature type="active site" description="Proton acceptor" evidence="1 2">
    <location>
        <position position="164"/>
    </location>
</feature>
<feature type="binding site" evidence="1">
    <location>
        <begin position="53"/>
        <end position="61"/>
    </location>
    <ligand>
        <name>ATP</name>
        <dbReference type="ChEBI" id="CHEBI:30616"/>
    </ligand>
</feature>
<feature type="binding site" evidence="1">
    <location>
        <position position="76"/>
    </location>
    <ligand>
        <name>ATP</name>
        <dbReference type="ChEBI" id="CHEBI:30616"/>
    </ligand>
</feature>
<comment type="function">
    <text>Casein kinases are operationally defined by their preferential utilization of acidic proteins such as caseins as substrates. The alpha chain contains the catalytic site.</text>
</comment>
<comment type="catalytic activity">
    <reaction>
        <text>L-seryl-[protein] + ATP = O-phospho-L-seryl-[protein] + ADP + H(+)</text>
        <dbReference type="Rhea" id="RHEA:17989"/>
        <dbReference type="Rhea" id="RHEA-COMP:9863"/>
        <dbReference type="Rhea" id="RHEA-COMP:11604"/>
        <dbReference type="ChEBI" id="CHEBI:15378"/>
        <dbReference type="ChEBI" id="CHEBI:29999"/>
        <dbReference type="ChEBI" id="CHEBI:30616"/>
        <dbReference type="ChEBI" id="CHEBI:83421"/>
        <dbReference type="ChEBI" id="CHEBI:456216"/>
        <dbReference type="EC" id="2.7.11.1"/>
    </reaction>
</comment>
<comment type="catalytic activity">
    <reaction>
        <text>L-threonyl-[protein] + ATP = O-phospho-L-threonyl-[protein] + ADP + H(+)</text>
        <dbReference type="Rhea" id="RHEA:46608"/>
        <dbReference type="Rhea" id="RHEA-COMP:11060"/>
        <dbReference type="Rhea" id="RHEA-COMP:11605"/>
        <dbReference type="ChEBI" id="CHEBI:15378"/>
        <dbReference type="ChEBI" id="CHEBI:30013"/>
        <dbReference type="ChEBI" id="CHEBI:30616"/>
        <dbReference type="ChEBI" id="CHEBI:61977"/>
        <dbReference type="ChEBI" id="CHEBI:456216"/>
        <dbReference type="EC" id="2.7.11.1"/>
    </reaction>
</comment>
<comment type="subunit">
    <text evidence="3">Tetramer of two alpha and two beta chains.</text>
</comment>
<comment type="similarity">
    <text evidence="3">Belongs to the protein kinase superfamily. CMGC Ser/Thr protein kinase family. CK2 subfamily.</text>
</comment>
<proteinExistence type="evidence at transcript level"/>
<reference key="1">
    <citation type="journal article" date="1992" name="Mol. Cell. Biol.">
        <title>Molecular cloning of casein kinase II alpha subunit from Dictyostelium discoideum and its expression in the life cycle.</title>
        <authorList>
            <person name="Kikkawa U."/>
            <person name="Mann S.K."/>
            <person name="Firtel R.A."/>
            <person name="Hunter T."/>
        </authorList>
    </citation>
    <scope>NUCLEOTIDE SEQUENCE [MRNA]</scope>
</reference>
<reference key="2">
    <citation type="journal article" date="2002" name="Nature">
        <title>Sequence and analysis of chromosome 2 of Dictyostelium discoideum.</title>
        <authorList>
            <person name="Gloeckner G."/>
            <person name="Eichinger L."/>
            <person name="Szafranski K."/>
            <person name="Pachebat J.A."/>
            <person name="Bankier A.T."/>
            <person name="Dear P.H."/>
            <person name="Lehmann R."/>
            <person name="Baumgart C."/>
            <person name="Parra G."/>
            <person name="Abril J.F."/>
            <person name="Guigo R."/>
            <person name="Kumpf K."/>
            <person name="Tunggal B."/>
            <person name="Cox E.C."/>
            <person name="Quail M.A."/>
            <person name="Platzer M."/>
            <person name="Rosenthal A."/>
            <person name="Noegel A.A."/>
        </authorList>
    </citation>
    <scope>NUCLEOTIDE SEQUENCE [LARGE SCALE GENOMIC DNA]</scope>
    <source>
        <strain>AX4</strain>
    </source>
</reference>
<reference key="3">
    <citation type="journal article" date="2005" name="Nature">
        <title>The genome of the social amoeba Dictyostelium discoideum.</title>
        <authorList>
            <person name="Eichinger L."/>
            <person name="Pachebat J.A."/>
            <person name="Gloeckner G."/>
            <person name="Rajandream M.A."/>
            <person name="Sucgang R."/>
            <person name="Berriman M."/>
            <person name="Song J."/>
            <person name="Olsen R."/>
            <person name="Szafranski K."/>
            <person name="Xu Q."/>
            <person name="Tunggal B."/>
            <person name="Kummerfeld S."/>
            <person name="Madera M."/>
            <person name="Konfortov B.A."/>
            <person name="Rivero F."/>
            <person name="Bankier A.T."/>
            <person name="Lehmann R."/>
            <person name="Hamlin N."/>
            <person name="Davies R."/>
            <person name="Gaudet P."/>
            <person name="Fey P."/>
            <person name="Pilcher K."/>
            <person name="Chen G."/>
            <person name="Saunders D."/>
            <person name="Sodergren E.J."/>
            <person name="Davis P."/>
            <person name="Kerhornou A."/>
            <person name="Nie X."/>
            <person name="Hall N."/>
            <person name="Anjard C."/>
            <person name="Hemphill L."/>
            <person name="Bason N."/>
            <person name="Farbrother P."/>
            <person name="Desany B."/>
            <person name="Just E."/>
            <person name="Morio T."/>
            <person name="Rost R."/>
            <person name="Churcher C.M."/>
            <person name="Cooper J."/>
            <person name="Haydock S."/>
            <person name="van Driessche N."/>
            <person name="Cronin A."/>
            <person name="Goodhead I."/>
            <person name="Muzny D.M."/>
            <person name="Mourier T."/>
            <person name="Pain A."/>
            <person name="Lu M."/>
            <person name="Harper D."/>
            <person name="Lindsay R."/>
            <person name="Hauser H."/>
            <person name="James K.D."/>
            <person name="Quiles M."/>
            <person name="Madan Babu M."/>
            <person name="Saito T."/>
            <person name="Buchrieser C."/>
            <person name="Wardroper A."/>
            <person name="Felder M."/>
            <person name="Thangavelu M."/>
            <person name="Johnson D."/>
            <person name="Knights A."/>
            <person name="Loulseged H."/>
            <person name="Mungall K.L."/>
            <person name="Oliver K."/>
            <person name="Price C."/>
            <person name="Quail M.A."/>
            <person name="Urushihara H."/>
            <person name="Hernandez J."/>
            <person name="Rabbinowitsch E."/>
            <person name="Steffen D."/>
            <person name="Sanders M."/>
            <person name="Ma J."/>
            <person name="Kohara Y."/>
            <person name="Sharp S."/>
            <person name="Simmonds M.N."/>
            <person name="Spiegler S."/>
            <person name="Tivey A."/>
            <person name="Sugano S."/>
            <person name="White B."/>
            <person name="Walker D."/>
            <person name="Woodward J.R."/>
            <person name="Winckler T."/>
            <person name="Tanaka Y."/>
            <person name="Shaulsky G."/>
            <person name="Schleicher M."/>
            <person name="Weinstock G.M."/>
            <person name="Rosenthal A."/>
            <person name="Cox E.C."/>
            <person name="Chisholm R.L."/>
            <person name="Gibbs R.A."/>
            <person name="Loomis W.F."/>
            <person name="Platzer M."/>
            <person name="Kay R.R."/>
            <person name="Williams J.G."/>
            <person name="Dear P.H."/>
            <person name="Noegel A.A."/>
            <person name="Barrell B.G."/>
            <person name="Kuspa A."/>
        </authorList>
    </citation>
    <scope>NUCLEOTIDE SEQUENCE [LARGE SCALE GENOMIC DNA]</scope>
    <source>
        <strain>AX4</strain>
    </source>
</reference>
<keyword id="KW-0067">ATP-binding</keyword>
<keyword id="KW-0418">Kinase</keyword>
<keyword id="KW-0547">Nucleotide-binding</keyword>
<keyword id="KW-1185">Reference proteome</keyword>
<keyword id="KW-0723">Serine/threonine-protein kinase</keyword>
<keyword id="KW-0808">Transferase</keyword>
<organism>
    <name type="scientific">Dictyostelium discoideum</name>
    <name type="common">Social amoeba</name>
    <dbReference type="NCBI Taxonomy" id="44689"/>
    <lineage>
        <taxon>Eukaryota</taxon>
        <taxon>Amoebozoa</taxon>
        <taxon>Evosea</taxon>
        <taxon>Eumycetozoa</taxon>
        <taxon>Dictyostelia</taxon>
        <taxon>Dictyosteliales</taxon>
        <taxon>Dictyosteliaceae</taxon>
        <taxon>Dictyostelium</taxon>
    </lineage>
</organism>
<gene>
    <name type="primary">casK</name>
    <name type="ORF">DDB_G0276885</name>
</gene>
<name>CSK2A_DICDI</name>
<protein>
    <recommendedName>
        <fullName>Casein kinase II subunit alpha</fullName>
        <shortName>CK II subunit alpha</shortName>
        <ecNumber>2.7.11.1</ecNumber>
    </recommendedName>
</protein>
<sequence>MNHSSKKNKNRILRNKARIYCDVNLHKPKEYWNYEALNVKWETQDDYEIIRKIGRGKYSEVFEGANIKNNEKCVIKVLKPVKKKKIKREIKILQNLCGGPNIITLYDVVRDPQSKTPSLIFEYINNTDFKHLSPTLTDFDVRYYIRELLHALDFCHSNGIMHRDVKPSNVMIDHQKRKLYLIDWGLAEFYHPNQDYNVRVASRPYKGPELLVDMEDYDYSLDMWSLGCMFAGMLFQKDPFFHGHDNIDQLVKIVKILGTEEFYAYLDKYGIVVDHTILSIIGKHPKKPWSRFITKENQHLAVPEAIDFLEKLLRYDPAERLTTREAMEHPYFKPLSH</sequence>
<dbReference type="EC" id="2.7.11.1"/>
<dbReference type="EMBL" id="L05535">
    <property type="protein sequence ID" value="AAA33180.1"/>
    <property type="molecule type" value="mRNA"/>
</dbReference>
<dbReference type="EMBL" id="AAFI02000019">
    <property type="protein sequence ID" value="EAL68944.1"/>
    <property type="molecule type" value="Genomic_DNA"/>
</dbReference>
<dbReference type="PIR" id="A45038">
    <property type="entry name" value="A45038"/>
</dbReference>
<dbReference type="RefSeq" id="XP_642893.1">
    <property type="nucleotide sequence ID" value="XM_637801.1"/>
</dbReference>
<dbReference type="SMR" id="Q02720"/>
<dbReference type="FunCoup" id="Q02720">
    <property type="interactions" value="984"/>
</dbReference>
<dbReference type="STRING" id="44689.Q02720"/>
<dbReference type="PaxDb" id="44689-DDB0185025"/>
<dbReference type="EnsemblProtists" id="EAL68944">
    <property type="protein sequence ID" value="EAL68944"/>
    <property type="gene ID" value="DDB_G0276885"/>
</dbReference>
<dbReference type="GeneID" id="8620759"/>
<dbReference type="KEGG" id="ddi:DDB_G0276885"/>
<dbReference type="dictyBase" id="DDB_G0276885">
    <property type="gene designation" value="casK"/>
</dbReference>
<dbReference type="VEuPathDB" id="AmoebaDB:DDB_G0276885"/>
<dbReference type="eggNOG" id="KOG0668">
    <property type="taxonomic scope" value="Eukaryota"/>
</dbReference>
<dbReference type="HOGENOM" id="CLU_000288_70_4_1"/>
<dbReference type="InParanoid" id="Q02720"/>
<dbReference type="OMA" id="ECHMIEW"/>
<dbReference type="PhylomeDB" id="Q02720"/>
<dbReference type="BRENDA" id="2.7.11.1">
    <property type="organism ID" value="1939"/>
</dbReference>
<dbReference type="Reactome" id="R-DDI-2514853">
    <property type="pathway name" value="Condensation of Prometaphase Chromosomes"/>
</dbReference>
<dbReference type="Reactome" id="R-DDI-6804756">
    <property type="pathway name" value="Regulation of TP53 Activity through Phosphorylation"/>
</dbReference>
<dbReference type="Reactome" id="R-DDI-8934903">
    <property type="pathway name" value="Receptor Mediated Mitophagy"/>
</dbReference>
<dbReference type="Reactome" id="R-DDI-8948751">
    <property type="pathway name" value="Regulation of PTEN stability and activity"/>
</dbReference>
<dbReference type="PRO" id="PR:Q02720"/>
<dbReference type="Proteomes" id="UP000002195">
    <property type="component" value="Chromosome 2"/>
</dbReference>
<dbReference type="GO" id="GO:0005829">
    <property type="term" value="C:cytosol"/>
    <property type="evidence" value="ECO:0000314"/>
    <property type="project" value="dictyBase"/>
</dbReference>
<dbReference type="GO" id="GO:0005634">
    <property type="term" value="C:nucleus"/>
    <property type="evidence" value="ECO:0000314"/>
    <property type="project" value="dictyBase"/>
</dbReference>
<dbReference type="GO" id="GO:0005956">
    <property type="term" value="C:protein kinase CK2 complex"/>
    <property type="evidence" value="ECO:0000314"/>
    <property type="project" value="dictyBase"/>
</dbReference>
<dbReference type="GO" id="GO:0005524">
    <property type="term" value="F:ATP binding"/>
    <property type="evidence" value="ECO:0000314"/>
    <property type="project" value="dictyBase"/>
</dbReference>
<dbReference type="GO" id="GO:0042802">
    <property type="term" value="F:identical protein binding"/>
    <property type="evidence" value="ECO:0000353"/>
    <property type="project" value="dictyBase"/>
</dbReference>
<dbReference type="GO" id="GO:0004672">
    <property type="term" value="F:protein kinase activity"/>
    <property type="evidence" value="ECO:0000314"/>
    <property type="project" value="dictyBase"/>
</dbReference>
<dbReference type="GO" id="GO:0106310">
    <property type="term" value="F:protein serine kinase activity"/>
    <property type="evidence" value="ECO:0007669"/>
    <property type="project" value="RHEA"/>
</dbReference>
<dbReference type="GO" id="GO:0004674">
    <property type="term" value="F:protein serine/threonine kinase activity"/>
    <property type="evidence" value="ECO:0000314"/>
    <property type="project" value="dictyBase"/>
</dbReference>
<dbReference type="GO" id="GO:0019954">
    <property type="term" value="P:asexual reproduction"/>
    <property type="evidence" value="ECO:0000315"/>
    <property type="project" value="dictyBase"/>
</dbReference>
<dbReference type="GO" id="GO:0006974">
    <property type="term" value="P:DNA damage response"/>
    <property type="evidence" value="ECO:0000318"/>
    <property type="project" value="GO_Central"/>
</dbReference>
<dbReference type="GO" id="GO:0006281">
    <property type="term" value="P:DNA repair"/>
    <property type="evidence" value="ECO:0000304"/>
    <property type="project" value="dictyBase"/>
</dbReference>
<dbReference type="GO" id="GO:0051726">
    <property type="term" value="P:regulation of cell cycle"/>
    <property type="evidence" value="ECO:0000318"/>
    <property type="project" value="GO_Central"/>
</dbReference>
<dbReference type="CDD" id="cd14132">
    <property type="entry name" value="STKc_CK2_alpha"/>
    <property type="match status" value="1"/>
</dbReference>
<dbReference type="FunFam" id="1.10.510.10:FF:000059">
    <property type="entry name" value="Casein kinase II subunit alpha"/>
    <property type="match status" value="1"/>
</dbReference>
<dbReference type="FunFam" id="3.30.200.20:FF:000088">
    <property type="entry name" value="Casein kinase II subunit alpha"/>
    <property type="match status" value="1"/>
</dbReference>
<dbReference type="Gene3D" id="3.30.200.20">
    <property type="entry name" value="Phosphorylase Kinase, domain 1"/>
    <property type="match status" value="1"/>
</dbReference>
<dbReference type="Gene3D" id="1.10.510.10">
    <property type="entry name" value="Transferase(Phosphotransferase) domain 1"/>
    <property type="match status" value="1"/>
</dbReference>
<dbReference type="InterPro" id="IPR045216">
    <property type="entry name" value="CK2_alpha"/>
</dbReference>
<dbReference type="InterPro" id="IPR011009">
    <property type="entry name" value="Kinase-like_dom_sf"/>
</dbReference>
<dbReference type="InterPro" id="IPR000719">
    <property type="entry name" value="Prot_kinase_dom"/>
</dbReference>
<dbReference type="InterPro" id="IPR017441">
    <property type="entry name" value="Protein_kinase_ATP_BS"/>
</dbReference>
<dbReference type="InterPro" id="IPR008271">
    <property type="entry name" value="Ser/Thr_kinase_AS"/>
</dbReference>
<dbReference type="PANTHER" id="PTHR24054">
    <property type="entry name" value="CASEIN KINASE II SUBUNIT ALPHA"/>
    <property type="match status" value="1"/>
</dbReference>
<dbReference type="PANTHER" id="PTHR24054:SF0">
    <property type="entry name" value="CASEIN KINASE II SUBUNIT ALPHA"/>
    <property type="match status" value="1"/>
</dbReference>
<dbReference type="Pfam" id="PF00069">
    <property type="entry name" value="Pkinase"/>
    <property type="match status" value="1"/>
</dbReference>
<dbReference type="SMART" id="SM00220">
    <property type="entry name" value="S_TKc"/>
    <property type="match status" value="1"/>
</dbReference>
<dbReference type="SUPFAM" id="SSF56112">
    <property type="entry name" value="Protein kinase-like (PK-like)"/>
    <property type="match status" value="1"/>
</dbReference>
<dbReference type="PROSITE" id="PS00107">
    <property type="entry name" value="PROTEIN_KINASE_ATP"/>
    <property type="match status" value="1"/>
</dbReference>
<dbReference type="PROSITE" id="PS50011">
    <property type="entry name" value="PROTEIN_KINASE_DOM"/>
    <property type="match status" value="1"/>
</dbReference>
<dbReference type="PROSITE" id="PS00108">
    <property type="entry name" value="PROTEIN_KINASE_ST"/>
    <property type="match status" value="1"/>
</dbReference>
<accession>Q02720</accession>
<accession>Q550N9</accession>
<evidence type="ECO:0000255" key="1">
    <source>
        <dbReference type="PROSITE-ProRule" id="PRU00159"/>
    </source>
</evidence>
<evidence type="ECO:0000255" key="2">
    <source>
        <dbReference type="PROSITE-ProRule" id="PRU10027"/>
    </source>
</evidence>
<evidence type="ECO:0000305" key="3"/>